<comment type="function">
    <text evidence="1">The JNK-interacting protein (JIP) group of scaffold proteins selectively mediates JNK signaling by aggregating specific components of the MAPK cascade to form a functional JNK signaling module. JIP2 inhibits IL1 beta-induced apoptosis in insulin-secreting cells. May function as a regulator of vesicle transport, through interactions with the JNK-signaling components and motor proteins (By similarity).</text>
</comment>
<comment type="subunit">
    <text evidence="2 3 7 8">Forms homo- or heterooligomeric complexes. Binds specific components of the JNK signaling pathway namely JNK1, JNK2, JNK3, MAP2K7, MAP3K10, MAP3K11, MAP3K12 and MAPK13. Also binds the proline-rich domain-containing splice variant of apolipoprotein E receptor 2 (ApoER2). Binds the cytoplasmic tails of LRP1 and LRP2 (Megalin). Binds the TPR motif-containing C-terminal of kinesin light chain, Klc1, pre-assembled MAPK8IP1 scaffolding complexes are then transported as a cargo of kinesin, to the required subcellular location (By similarity). Interacts with the cytoplasmic domain of APP (By similarity). Interacts with DCLK2. Interacts with TIAM1 and TIAM2 (By similarity). Interacts with FGF13; enables the interaction with MAPK13 and may regulate the MAPK8IP2 scaffolding activity. Interacts with SH3RF2 (By similarity).</text>
</comment>
<comment type="interaction">
    <interactant intactId="EBI-722813">
        <id>Q13387</id>
    </interactant>
    <interactant intactId="EBI-10692491">
        <id>Q15389-2</id>
        <label>ANGPT1</label>
    </interactant>
    <organismsDiffer>false</organismsDiffer>
    <experiments>3</experiments>
</comment>
<comment type="interaction">
    <interactant intactId="EBI-722813">
        <id>Q13387</id>
    </interactant>
    <interactant intactId="EBI-297353">
        <id>P00533</id>
        <label>EGFR</label>
    </interactant>
    <organismsDiffer>false</organismsDiffer>
    <experiments>5</experiments>
</comment>
<comment type="interaction">
    <interactant intactId="EBI-722813">
        <id>Q13387</id>
    </interactant>
    <interactant intactId="EBI-641062">
        <id>P04626</id>
        <label>ERBB2</label>
    </interactant>
    <organismsDiffer>false</organismsDiffer>
    <experiments>3</experiments>
</comment>
<comment type="interaction">
    <interactant intactId="EBI-722813">
        <id>Q13387</id>
    </interactant>
    <interactant intactId="EBI-6657186">
        <id>O15205</id>
        <label>UBD</label>
    </interactant>
    <organismsDiffer>false</organismsDiffer>
    <experiments>3</experiments>
</comment>
<comment type="interaction">
    <interactant intactId="EBI-722813">
        <id>Q13387</id>
    </interactant>
    <interactant intactId="EBI-877761">
        <id>Q53HF2</id>
    </interactant>
    <organismsDiffer>false</organismsDiffer>
    <experiments>2</experiments>
</comment>
<comment type="interaction">
    <interactant intactId="EBI-12345753">
        <id>Q13387-4</id>
    </interactant>
    <interactant intactId="EBI-1383687">
        <id>Q9UQM7</id>
        <label>CAMK2A</label>
    </interactant>
    <organismsDiffer>false</organismsDiffer>
    <experiments>3</experiments>
</comment>
<comment type="interaction">
    <interactant intactId="EBI-12345753">
        <id>Q13387-4</id>
    </interactant>
    <interactant intactId="EBI-12248206">
        <id>P29466-3</id>
        <label>CASP1</label>
    </interactant>
    <organismsDiffer>false</organismsDiffer>
    <experiments>3</experiments>
</comment>
<comment type="interaction">
    <interactant intactId="EBI-12345753">
        <id>Q13387-4</id>
    </interactant>
    <interactant intactId="EBI-744302">
        <id>P14136</id>
        <label>GFAP</label>
    </interactant>
    <organismsDiffer>false</organismsDiffer>
    <experiments>3</experiments>
</comment>
<comment type="interaction">
    <interactant intactId="EBI-12345753">
        <id>Q13387-4</id>
    </interactant>
    <interactant intactId="EBI-1752118">
        <id>P31273</id>
        <label>HOXC8</label>
    </interactant>
    <organismsDiffer>false</organismsDiffer>
    <experiments>3</experiments>
</comment>
<comment type="interaction">
    <interactant intactId="EBI-12345753">
        <id>Q13387-4</id>
    </interactant>
    <interactant intactId="EBI-703066">
        <id>P05556</id>
        <label>ITGB1</label>
    </interactant>
    <organismsDiffer>false</organismsDiffer>
    <experiments>3</experiments>
</comment>
<comment type="interaction">
    <interactant intactId="EBI-12345753">
        <id>Q13387-4</id>
    </interactant>
    <interactant intactId="EBI-9090282">
        <id>P27986-2</id>
        <label>PIK3R1</label>
    </interactant>
    <organismsDiffer>false</organismsDiffer>
    <experiments>3</experiments>
</comment>
<comment type="interaction">
    <interactant intactId="EBI-12345753">
        <id>Q13387-4</id>
    </interactant>
    <interactant intactId="EBI-476586">
        <id>P17612</id>
        <label>PRKACA</label>
    </interactant>
    <organismsDiffer>false</organismsDiffer>
    <experiments>3</experiments>
</comment>
<comment type="interaction">
    <interactant intactId="EBI-12345753">
        <id>Q13387-4</id>
    </interactant>
    <interactant intactId="EBI-413628">
        <id>P63000</id>
        <label>RAC1</label>
    </interactant>
    <organismsDiffer>false</organismsDiffer>
    <experiments>3</experiments>
</comment>
<comment type="interaction">
    <interactant intactId="EBI-12345753">
        <id>Q13387-4</id>
    </interactant>
    <interactant intactId="EBI-1172957">
        <id>P34741</id>
        <label>SDC2</label>
    </interactant>
    <organismsDiffer>false</organismsDiffer>
    <experiments>3</experiments>
</comment>
<comment type="subcellular location">
    <subcellularLocation>
        <location evidence="7">Cytoplasm</location>
    </subcellularLocation>
    <text evidence="7">Accumulates in cell surface projections.</text>
</comment>
<comment type="alternative products">
    <event type="alternative splicing"/>
    <isoform>
        <id>Q13387-1</id>
        <name>1</name>
        <sequence type="displayed"/>
    </isoform>
    <isoform>
        <id>Q13387-2</id>
        <name>2</name>
        <sequence type="described" ref="VSP_002770"/>
    </isoform>
    <isoform>
        <id>Q13387-3</id>
        <name>3</name>
        <sequence type="described" ref="VSP_002770 VSP_002772 VSP_002773 VSP_002774"/>
    </isoform>
    <isoform>
        <id>Q13387-4</id>
        <name>4</name>
        <sequence type="described" ref="VSP_002771"/>
    </isoform>
    <text>Experimental confirmation may be lacking for some isoforms.</text>
</comment>
<comment type="tissue specificity">
    <text>Expressed mainly in the brain and pancreas, including insulin-secreting cells. In the nervous system, more abundantly expressed in the cerebellum, pituitary gland, occipital lobe and the amygdala. Also expressed in fetal brain. Very low levels found in uterus, ovary, prostate, colon, testis, adrenal gland, thyroid gland and salivary gland.</text>
</comment>
<comment type="miscellaneous">
    <molecule>Isoform 3</molecule>
    <text evidence="11">Might be artifactual as it is only predicted from a genomic sequence.</text>
</comment>
<comment type="similarity">
    <text evidence="11">Belongs to the JIP scaffold family.</text>
</comment>
<comment type="sequence caution" evidence="11">
    <conflict type="erroneous initiation">
        <sequence resource="EMBL-CDS" id="CAA16714"/>
    </conflict>
</comment>
<dbReference type="EMBL" id="AF136382">
    <property type="protein sequence ID" value="AAF00980.1"/>
    <property type="molecule type" value="mRNA"/>
</dbReference>
<dbReference type="EMBL" id="AF218778">
    <property type="protein sequence ID" value="AAF32323.1"/>
    <property type="molecule type" value="mRNA"/>
</dbReference>
<dbReference type="EMBL" id="U62317">
    <property type="protein sequence ID" value="AAB03340.1"/>
    <property type="molecule type" value="Genomic_DNA"/>
</dbReference>
<dbReference type="EMBL" id="BC009940">
    <property type="protein sequence ID" value="AAH09940.2"/>
    <property type="molecule type" value="mRNA"/>
</dbReference>
<dbReference type="EMBL" id="AL021708">
    <property type="protein sequence ID" value="CAA16714.1"/>
    <property type="status" value="ALT_INIT"/>
    <property type="molecule type" value="mRNA"/>
</dbReference>
<dbReference type="EMBL" id="U79261">
    <property type="protein sequence ID" value="AAB50207.1"/>
    <property type="molecule type" value="mRNA"/>
</dbReference>
<dbReference type="CCDS" id="CCDS74886.1">
    <molecule id="Q13387-1"/>
</dbReference>
<dbReference type="RefSeq" id="NP_036456.1">
    <molecule id="Q13387-1"/>
    <property type="nucleotide sequence ID" value="NM_012324.6"/>
</dbReference>
<dbReference type="PDB" id="8RPP">
    <property type="method" value="X-ray"/>
    <property type="resolution" value="1.87 A"/>
    <property type="chains" value="A/B/C=605-665"/>
</dbReference>
<dbReference type="PDBsum" id="8RPP"/>
<dbReference type="SMR" id="Q13387"/>
<dbReference type="BioGRID" id="117086">
    <property type="interactions" value="111"/>
</dbReference>
<dbReference type="CORUM" id="Q13387"/>
<dbReference type="FunCoup" id="Q13387">
    <property type="interactions" value="486"/>
</dbReference>
<dbReference type="IntAct" id="Q13387">
    <property type="interactions" value="100"/>
</dbReference>
<dbReference type="MINT" id="Q13387"/>
<dbReference type="STRING" id="9606.ENSP00000330572"/>
<dbReference type="MoonDB" id="Q13387">
    <property type="type" value="Predicted"/>
</dbReference>
<dbReference type="iPTMnet" id="Q13387"/>
<dbReference type="PhosphoSitePlus" id="Q13387"/>
<dbReference type="BioMuta" id="MAPK8IP2"/>
<dbReference type="DMDM" id="17433017"/>
<dbReference type="jPOST" id="Q13387"/>
<dbReference type="MassIVE" id="Q13387"/>
<dbReference type="PaxDb" id="9606-ENSP00000330572"/>
<dbReference type="PeptideAtlas" id="Q13387"/>
<dbReference type="ProteomicsDB" id="59356">
    <molecule id="Q13387-1"/>
</dbReference>
<dbReference type="ProteomicsDB" id="59357">
    <molecule id="Q13387-2"/>
</dbReference>
<dbReference type="ProteomicsDB" id="59358">
    <molecule id="Q13387-3"/>
</dbReference>
<dbReference type="ProteomicsDB" id="59359">
    <molecule id="Q13387-4"/>
</dbReference>
<dbReference type="Antibodypedia" id="28835">
    <property type="antibodies" value="230 antibodies from 28 providers"/>
</dbReference>
<dbReference type="DNASU" id="23542"/>
<dbReference type="Ensembl" id="ENST00000329492.6">
    <molecule id="Q13387-1"/>
    <property type="protein sequence ID" value="ENSP00000330572.4"/>
    <property type="gene ID" value="ENSG00000008735.14"/>
</dbReference>
<dbReference type="GeneID" id="23542"/>
<dbReference type="KEGG" id="hsa:23542"/>
<dbReference type="MANE-Select" id="ENST00000329492.6">
    <property type="protein sequence ID" value="ENSP00000330572.4"/>
    <property type="RefSeq nucleotide sequence ID" value="NM_012324.6"/>
    <property type="RefSeq protein sequence ID" value="NP_036456.1"/>
</dbReference>
<dbReference type="UCSC" id="uc032qrw.2">
    <molecule id="Q13387-1"/>
    <property type="organism name" value="human"/>
</dbReference>
<dbReference type="AGR" id="HGNC:6883"/>
<dbReference type="CTD" id="23542"/>
<dbReference type="DisGeNET" id="23542"/>
<dbReference type="GeneCards" id="MAPK8IP2"/>
<dbReference type="HGNC" id="HGNC:6883">
    <property type="gene designation" value="MAPK8IP2"/>
</dbReference>
<dbReference type="HPA" id="ENSG00000008735">
    <property type="expression patterns" value="Tissue enriched (brain)"/>
</dbReference>
<dbReference type="MalaCards" id="MAPK8IP2"/>
<dbReference type="MIM" id="607755">
    <property type="type" value="gene"/>
</dbReference>
<dbReference type="neXtProt" id="NX_Q13387"/>
<dbReference type="OpenTargets" id="ENSG00000008735"/>
<dbReference type="PharmGKB" id="PA30627"/>
<dbReference type="VEuPathDB" id="HostDB:ENSG00000008735"/>
<dbReference type="eggNOG" id="KOG3775">
    <property type="taxonomic scope" value="Eukaryota"/>
</dbReference>
<dbReference type="GeneTree" id="ENSGT00940000160461"/>
<dbReference type="HOGENOM" id="CLU_006711_0_0_1"/>
<dbReference type="InParanoid" id="Q13387"/>
<dbReference type="OMA" id="EPHKNRP"/>
<dbReference type="OrthoDB" id="5965083at2759"/>
<dbReference type="PAN-GO" id="Q13387">
    <property type="GO annotations" value="2 GO annotations based on evolutionary models"/>
</dbReference>
<dbReference type="PhylomeDB" id="Q13387"/>
<dbReference type="PathwayCommons" id="Q13387"/>
<dbReference type="SignaLink" id="Q13387"/>
<dbReference type="SIGNOR" id="Q13387"/>
<dbReference type="BioGRID-ORCS" id="23542">
    <property type="hits" value="9 hits in 363 CRISPR screens"/>
</dbReference>
<dbReference type="ChiTaRS" id="MAPK8IP2">
    <property type="organism name" value="human"/>
</dbReference>
<dbReference type="GeneWiki" id="MAPK8IP2"/>
<dbReference type="GenomeRNAi" id="23542"/>
<dbReference type="Pharos" id="Q13387">
    <property type="development level" value="Tbio"/>
</dbReference>
<dbReference type="PRO" id="PR:Q13387"/>
<dbReference type="Proteomes" id="UP000005640">
    <property type="component" value="Chromosome 22"/>
</dbReference>
<dbReference type="RNAct" id="Q13387">
    <property type="molecule type" value="protein"/>
</dbReference>
<dbReference type="Bgee" id="ENSG00000008735">
    <property type="expression patterns" value="Expressed in Brodmann (1909) area 10 and 164 other cell types or tissues"/>
</dbReference>
<dbReference type="GO" id="GO:0005737">
    <property type="term" value="C:cytoplasm"/>
    <property type="evidence" value="ECO:0000314"/>
    <property type="project" value="UniProtKB"/>
</dbReference>
<dbReference type="GO" id="GO:0043025">
    <property type="term" value="C:neuronal cell body"/>
    <property type="evidence" value="ECO:0007669"/>
    <property type="project" value="Ensembl"/>
</dbReference>
<dbReference type="GO" id="GO:0014069">
    <property type="term" value="C:postsynaptic density"/>
    <property type="evidence" value="ECO:0000250"/>
    <property type="project" value="BHF-UCL"/>
</dbReference>
<dbReference type="GO" id="GO:0032991">
    <property type="term" value="C:protein-containing complex"/>
    <property type="evidence" value="ECO:0007669"/>
    <property type="project" value="Ensembl"/>
</dbReference>
<dbReference type="GO" id="GO:0001540">
    <property type="term" value="F:amyloid-beta binding"/>
    <property type="evidence" value="ECO:0000303"/>
    <property type="project" value="UniProtKB"/>
</dbReference>
<dbReference type="GO" id="GO:0008432">
    <property type="term" value="F:JUN kinase binding"/>
    <property type="evidence" value="ECO:0000318"/>
    <property type="project" value="GO_Central"/>
</dbReference>
<dbReference type="GO" id="GO:0019894">
    <property type="term" value="F:kinesin binding"/>
    <property type="evidence" value="ECO:0000250"/>
    <property type="project" value="UniProtKB"/>
</dbReference>
<dbReference type="GO" id="GO:0005078">
    <property type="term" value="F:MAP-kinase scaffold activity"/>
    <property type="evidence" value="ECO:0000314"/>
    <property type="project" value="UniProtKB"/>
</dbReference>
<dbReference type="GO" id="GO:0030295">
    <property type="term" value="F:protein kinase activator activity"/>
    <property type="evidence" value="ECO:0000314"/>
    <property type="project" value="MGI"/>
</dbReference>
<dbReference type="GO" id="GO:0019901">
    <property type="term" value="F:protein kinase binding"/>
    <property type="evidence" value="ECO:0000353"/>
    <property type="project" value="UniProtKB"/>
</dbReference>
<dbReference type="GO" id="GO:0044877">
    <property type="term" value="F:protein-containing complex binding"/>
    <property type="evidence" value="ECO:0007669"/>
    <property type="project" value="Ensembl"/>
</dbReference>
<dbReference type="GO" id="GO:0005198">
    <property type="term" value="F:structural molecule activity"/>
    <property type="evidence" value="ECO:0000304"/>
    <property type="project" value="ProtInc"/>
</dbReference>
<dbReference type="GO" id="GO:0001662">
    <property type="term" value="P:behavioral fear response"/>
    <property type="evidence" value="ECO:0000250"/>
    <property type="project" value="BHF-UCL"/>
</dbReference>
<dbReference type="GO" id="GO:0048813">
    <property type="term" value="P:dendrite morphogenesis"/>
    <property type="evidence" value="ECO:0000250"/>
    <property type="project" value="BHF-UCL"/>
</dbReference>
<dbReference type="GO" id="GO:0060079">
    <property type="term" value="P:excitatory postsynaptic potential"/>
    <property type="evidence" value="ECO:0007669"/>
    <property type="project" value="Ensembl"/>
</dbReference>
<dbReference type="GO" id="GO:0007254">
    <property type="term" value="P:JNK cascade"/>
    <property type="evidence" value="ECO:0000318"/>
    <property type="project" value="GO_Central"/>
</dbReference>
<dbReference type="GO" id="GO:0000165">
    <property type="term" value="P:MAPK cascade"/>
    <property type="evidence" value="ECO:0000314"/>
    <property type="project" value="MGI"/>
</dbReference>
<dbReference type="GO" id="GO:0007617">
    <property type="term" value="P:mating behavior"/>
    <property type="evidence" value="ECO:0007669"/>
    <property type="project" value="Ensembl"/>
</dbReference>
<dbReference type="GO" id="GO:0098815">
    <property type="term" value="P:modulation of excitatory postsynaptic potential"/>
    <property type="evidence" value="ECO:0000250"/>
    <property type="project" value="BHF-UCL"/>
</dbReference>
<dbReference type="GO" id="GO:2001234">
    <property type="term" value="P:negative regulation of apoptotic signaling pathway"/>
    <property type="evidence" value="ECO:0000314"/>
    <property type="project" value="UniProtKB"/>
</dbReference>
<dbReference type="GO" id="GO:0046958">
    <property type="term" value="P:nonassociative learning"/>
    <property type="evidence" value="ECO:0000250"/>
    <property type="project" value="BHF-UCL"/>
</dbReference>
<dbReference type="GO" id="GO:0032874">
    <property type="term" value="P:positive regulation of stress-activated MAPK cascade"/>
    <property type="evidence" value="ECO:0007669"/>
    <property type="project" value="Ensembl"/>
</dbReference>
<dbReference type="GO" id="GO:0046328">
    <property type="term" value="P:regulation of JNK cascade"/>
    <property type="evidence" value="ECO:0000314"/>
    <property type="project" value="UniProtKB"/>
</dbReference>
<dbReference type="GO" id="GO:0051966">
    <property type="term" value="P:regulation of synaptic transmission, glutamatergic"/>
    <property type="evidence" value="ECO:0000250"/>
    <property type="project" value="BHF-UCL"/>
</dbReference>
<dbReference type="GO" id="GO:0007172">
    <property type="term" value="P:signal complex assembly"/>
    <property type="evidence" value="ECO:0000304"/>
    <property type="project" value="ProtInc"/>
</dbReference>
<dbReference type="GO" id="GO:0035176">
    <property type="term" value="P:social behavior"/>
    <property type="evidence" value="ECO:0000250"/>
    <property type="project" value="BHF-UCL"/>
</dbReference>
<dbReference type="CDD" id="cd01212">
    <property type="entry name" value="PTB_JIP"/>
    <property type="match status" value="1"/>
</dbReference>
<dbReference type="CDD" id="cd11942">
    <property type="entry name" value="SH3_JIP2"/>
    <property type="match status" value="1"/>
</dbReference>
<dbReference type="FunFam" id="2.30.29.30:FF:000108">
    <property type="entry name" value="C-Jun-amino-terminal kinase-interacting protein 1 isoform X2"/>
    <property type="match status" value="1"/>
</dbReference>
<dbReference type="FunFam" id="2.30.30.40:FF:000032">
    <property type="entry name" value="Putative C-Jun-amino-terminal kinase-interacting protein 2"/>
    <property type="match status" value="1"/>
</dbReference>
<dbReference type="Gene3D" id="2.30.29.30">
    <property type="entry name" value="Pleckstrin-homology domain (PH domain)/Phosphotyrosine-binding domain (PTB)"/>
    <property type="match status" value="1"/>
</dbReference>
<dbReference type="Gene3D" id="2.30.30.40">
    <property type="entry name" value="SH3 Domains"/>
    <property type="match status" value="1"/>
</dbReference>
<dbReference type="InterPro" id="IPR047178">
    <property type="entry name" value="JIP1_scaffold"/>
</dbReference>
<dbReference type="InterPro" id="IPR035637">
    <property type="entry name" value="JIP2_SH3"/>
</dbReference>
<dbReference type="InterPro" id="IPR011993">
    <property type="entry name" value="PH-like_dom_sf"/>
</dbReference>
<dbReference type="InterPro" id="IPR006020">
    <property type="entry name" value="PTB/PI_dom"/>
</dbReference>
<dbReference type="InterPro" id="IPR001452">
    <property type="entry name" value="SH3_domain"/>
</dbReference>
<dbReference type="PANTHER" id="PTHR47437:SF2">
    <property type="entry name" value="C-JUN-AMINO-TERMINAL KINASE-INTERACTING PROTEIN 2"/>
    <property type="match status" value="1"/>
</dbReference>
<dbReference type="PANTHER" id="PTHR47437">
    <property type="entry name" value="JNK-INTERACTING PROTEIN 1-LIKE PROTEIN"/>
    <property type="match status" value="1"/>
</dbReference>
<dbReference type="Pfam" id="PF00640">
    <property type="entry name" value="PID"/>
    <property type="match status" value="1"/>
</dbReference>
<dbReference type="Pfam" id="PF14604">
    <property type="entry name" value="SH3_9"/>
    <property type="match status" value="1"/>
</dbReference>
<dbReference type="SMART" id="SM00462">
    <property type="entry name" value="PTB"/>
    <property type="match status" value="1"/>
</dbReference>
<dbReference type="SMART" id="SM00326">
    <property type="entry name" value="SH3"/>
    <property type="match status" value="1"/>
</dbReference>
<dbReference type="SUPFAM" id="SSF50729">
    <property type="entry name" value="PH domain-like"/>
    <property type="match status" value="1"/>
</dbReference>
<dbReference type="PROSITE" id="PS01179">
    <property type="entry name" value="PID"/>
    <property type="match status" value="1"/>
</dbReference>
<dbReference type="PROSITE" id="PS50002">
    <property type="entry name" value="SH3"/>
    <property type="match status" value="1"/>
</dbReference>
<feature type="chain" id="PRO_0000220631" description="C-Jun-amino-terminal kinase-interacting protein 2">
    <location>
        <begin position="1"/>
        <end position="824"/>
    </location>
</feature>
<feature type="domain" description="SH3" evidence="5">
    <location>
        <begin position="604"/>
        <end position="665"/>
    </location>
</feature>
<feature type="domain" description="PID" evidence="4">
    <location>
        <begin position="677"/>
        <end position="813"/>
    </location>
</feature>
<feature type="region of interest" description="Disordered" evidence="6">
    <location>
        <begin position="1"/>
        <end position="28"/>
    </location>
</feature>
<feature type="region of interest" description="Disordered" evidence="6">
    <location>
        <begin position="40"/>
        <end position="160"/>
    </location>
</feature>
<feature type="region of interest" description="JNK-binding domain (JBD)">
    <location>
        <begin position="110"/>
        <end position="275"/>
    </location>
</feature>
<feature type="region of interest" description="Disordered" evidence="6">
    <location>
        <begin position="172"/>
        <end position="349"/>
    </location>
</feature>
<feature type="region of interest" description="Necessary for interaction with FGF13" evidence="8">
    <location>
        <begin position="239"/>
        <end position="498"/>
    </location>
</feature>
<feature type="region of interest" description="Disordered" evidence="6">
    <location>
        <begin position="361"/>
        <end position="501"/>
    </location>
</feature>
<feature type="compositionally biased region" description="Acidic residues" evidence="6">
    <location>
        <begin position="77"/>
        <end position="110"/>
    </location>
</feature>
<feature type="compositionally biased region" description="Polar residues" evidence="6">
    <location>
        <begin position="141"/>
        <end position="156"/>
    </location>
</feature>
<feature type="compositionally biased region" description="Low complexity" evidence="6">
    <location>
        <begin position="268"/>
        <end position="305"/>
    </location>
</feature>
<feature type="compositionally biased region" description="Acidic residues" evidence="6">
    <location>
        <begin position="327"/>
        <end position="346"/>
    </location>
</feature>
<feature type="compositionally biased region" description="Pro residues" evidence="6">
    <location>
        <begin position="416"/>
        <end position="432"/>
    </location>
</feature>
<feature type="compositionally biased region" description="Low complexity" evidence="6">
    <location>
        <begin position="451"/>
        <end position="467"/>
    </location>
</feature>
<feature type="compositionally biased region" description="Acidic residues" evidence="6">
    <location>
        <begin position="468"/>
        <end position="484"/>
    </location>
</feature>
<feature type="modified residue" description="Phosphoserine" evidence="3">
    <location>
        <position position="254"/>
    </location>
</feature>
<feature type="modified residue" description="Phosphoserine" evidence="3">
    <location>
        <position position="302"/>
    </location>
</feature>
<feature type="modified residue" description="Phosphoserine" evidence="3">
    <location>
        <position position="305"/>
    </location>
</feature>
<feature type="splice variant" id="VSP_002770" description="In isoform 2 and isoform 3." evidence="9">
    <original>MADRAEMFSLSTFHSLSPPGCRPPQDISLEEFDDEDLSEITDDCGLGLSYDSDHCEK</original>
    <variation>MLPDFPSPSTWAPGLLLPSGPALLSPSVLQ</variation>
    <location>
        <begin position="1"/>
        <end position="57"/>
    </location>
</feature>
<feature type="splice variant" id="VSP_002771" description="In isoform 4." evidence="10">
    <location>
        <begin position="88"/>
        <end position="468"/>
    </location>
</feature>
<feature type="splice variant" id="VSP_002772" description="In isoform 3." evidence="11">
    <location>
        <begin position="152"/>
        <end position="394"/>
    </location>
</feature>
<feature type="splice variant" id="VSP_002773" description="In isoform 3." evidence="11">
    <location>
        <begin position="415"/>
        <end position="439"/>
    </location>
</feature>
<feature type="splice variant" id="VSP_002774" description="In isoform 3." evidence="11">
    <original>C</original>
    <variation>CEAPQGAAFQWERGVDRKRVLQTRGNVQPHLGAGQGAALNRATEGSSTGSEKGEWTPLVIMELTQSVNSC</variation>
    <location>
        <position position="768"/>
    </location>
</feature>
<feature type="sequence variant" id="VAR_049666" description="In dbSNP:rs1140555.">
    <original>P</original>
    <variation>L</variation>
    <location>
        <position position="743"/>
    </location>
</feature>
<feature type="strand" evidence="12">
    <location>
        <begin position="609"/>
        <end position="611"/>
    </location>
</feature>
<feature type="strand" evidence="12">
    <location>
        <begin position="630"/>
        <end position="636"/>
    </location>
</feature>
<feature type="strand" evidence="12">
    <location>
        <begin position="641"/>
        <end position="646"/>
    </location>
</feature>
<feature type="turn" evidence="12">
    <location>
        <begin position="647"/>
        <end position="650"/>
    </location>
</feature>
<feature type="strand" evidence="12">
    <location>
        <begin position="651"/>
        <end position="656"/>
    </location>
</feature>
<feature type="helix" evidence="12">
    <location>
        <begin position="657"/>
        <end position="659"/>
    </location>
</feature>
<feature type="strand" evidence="12">
    <location>
        <begin position="660"/>
        <end position="662"/>
    </location>
</feature>
<protein>
    <recommendedName>
        <fullName>C-Jun-amino-terminal kinase-interacting protein 2</fullName>
        <shortName>JIP-2</shortName>
        <shortName>JNK-interacting protein 2</shortName>
    </recommendedName>
    <alternativeName>
        <fullName>Islet-brain-2</fullName>
        <shortName>IB-2</shortName>
    </alternativeName>
    <alternativeName>
        <fullName>JNK MAP kinase scaffold protein 2</fullName>
    </alternativeName>
    <alternativeName>
        <fullName>Mitogen-activated protein kinase 8-interacting protein 2</fullName>
    </alternativeName>
</protein>
<sequence>MADRAEMFSLSTFHSLSPPGCRPPQDISLEEFDDEDLSEITDDCGLGLSYDSDHCEKDSLSLGRSEQPHPICSFQDDFQEFEMIDDNEEEDDEDEEEEEEEEEGDGEGQEGGDPGSEAPAPGPLIPSPSVEEPHKHRPTTLRLTTLGAQDSLNNNGGFDLVRPASWQETALCSPAPEALRELPGPLPATDTGPGGAQSPVRPGCDCEGNRPAEPPAPGGTSPSSDPGIEADLRSRSSGGRGGRRSSQELSSPGSDSEDAGGARLGRMISSISETELELSSDGGSSSSGRSSHLTNSIEEASSPASEPEPPREPPRRPAFLPVGPDDTNSEYESGSESEPDLSEDADSPWLLSNLVSRMISEGSSPIRCPGQCLSPAPRPPGEPVSPAGGAAQDSQDPEAAAGPGGVELVDMETLCAPPPPAPAAPRPGPAQPGPCLFLSNPTRDTITPLWAAPGRAARPGRACSAACSEEEDEEDDEEEEDAEDSAGSPGGRGTGPSAPRDASLVYDAVKYTLVVDEHTQLELVSLRRCAGLGHDSEEDSGGEASEEEAGAALLGGGQVSGDTSPDSPDLTFSKKFLNVFVNSTSRSSSTESFGLFSCLVNGEEREQTHRAVFRFIPRHPDELELDVDDPVLVEAEEDDFWFRGFNMRTGERGVFPAFYAHAVPGPAKDLLGSKRSPCWVERFDVQFLGSVEVPCHQGNGILCAAMQKIATARKLTVHLRPPASCDLEISLRGVKLSLSGGGPEFQRCSHFFQMKNISFCGCHPRNSCYFGFITKHPLLSRFACHVFVSQESMRPVAQSVGRAFLEYYQEHLAYACPTEDIYLE</sequence>
<name>JIP2_HUMAN</name>
<keyword id="KW-0002">3D-structure</keyword>
<keyword id="KW-0025">Alternative splicing</keyword>
<keyword id="KW-0963">Cytoplasm</keyword>
<keyword id="KW-0597">Phosphoprotein</keyword>
<keyword id="KW-1267">Proteomics identification</keyword>
<keyword id="KW-1185">Reference proteome</keyword>
<keyword id="KW-0728">SH3 domain</keyword>
<accession>Q13387</accession>
<accession>Q96G62</accession>
<accession>Q99771</accession>
<accession>Q9NZ59</accession>
<accession>Q9UKQ4</accession>
<organism>
    <name type="scientific">Homo sapiens</name>
    <name type="common">Human</name>
    <dbReference type="NCBI Taxonomy" id="9606"/>
    <lineage>
        <taxon>Eukaryota</taxon>
        <taxon>Metazoa</taxon>
        <taxon>Chordata</taxon>
        <taxon>Craniata</taxon>
        <taxon>Vertebrata</taxon>
        <taxon>Euteleostomi</taxon>
        <taxon>Mammalia</taxon>
        <taxon>Eutheria</taxon>
        <taxon>Euarchontoglires</taxon>
        <taxon>Primates</taxon>
        <taxon>Haplorrhini</taxon>
        <taxon>Catarrhini</taxon>
        <taxon>Hominidae</taxon>
        <taxon>Homo</taxon>
    </lineage>
</organism>
<evidence type="ECO:0000250" key="1"/>
<evidence type="ECO:0000250" key="2">
    <source>
        <dbReference type="UniProtKB" id="G3V9M2"/>
    </source>
</evidence>
<evidence type="ECO:0000250" key="3">
    <source>
        <dbReference type="UniProtKB" id="Q9ERE9"/>
    </source>
</evidence>
<evidence type="ECO:0000255" key="4">
    <source>
        <dbReference type="PROSITE-ProRule" id="PRU00148"/>
    </source>
</evidence>
<evidence type="ECO:0000255" key="5">
    <source>
        <dbReference type="PROSITE-ProRule" id="PRU00192"/>
    </source>
</evidence>
<evidence type="ECO:0000256" key="6">
    <source>
        <dbReference type="SAM" id="MobiDB-lite"/>
    </source>
</evidence>
<evidence type="ECO:0000269" key="7">
    <source>
    </source>
</evidence>
<evidence type="ECO:0000269" key="8">
    <source>
    </source>
</evidence>
<evidence type="ECO:0000303" key="9">
    <source>
    </source>
</evidence>
<evidence type="ECO:0000303" key="10">
    <source>
    </source>
</evidence>
<evidence type="ECO:0000305" key="11"/>
<evidence type="ECO:0007829" key="12">
    <source>
        <dbReference type="PDB" id="8RPP"/>
    </source>
</evidence>
<proteinExistence type="evidence at protein level"/>
<gene>
    <name type="primary">MAPK8IP2</name>
    <name type="synonym">IB2</name>
    <name type="synonym">JIP2</name>
    <name type="synonym">PRKM8IPL</name>
</gene>
<reference key="1">
    <citation type="journal article" date="1999" name="Mol. Cell. Biol.">
        <title>The JIP group of mitogen-activated protein kinase scaffold proteins.</title>
        <authorList>
            <person name="Yasuda J."/>
            <person name="Whitmarsh A.J."/>
            <person name="Cavanagh J."/>
            <person name="Sharma M."/>
            <person name="Davis R.J."/>
        </authorList>
    </citation>
    <scope>NUCLEOTIDE SEQUENCE [MRNA] (ISOFORM 1)</scope>
    <scope>INTERACTION WITH JNK1; JNK2; JNK3; MAP2K7; MAP3K10; MAP3K11 AND MAP3K12</scope>
    <scope>SUBCELLULAR LOCATION</scope>
    <source>
        <tissue>Brain</tissue>
    </source>
</reference>
<reference key="2">
    <citation type="journal article" date="2000" name="Genomics">
        <title>cDNA cloning and mapping of a novel islet-brain/JNK interacting protein.</title>
        <authorList>
            <person name="Negri S."/>
            <person name="Oberson A."/>
            <person name="Steinmann M."/>
            <person name="Sauser C."/>
            <person name="Nicod P."/>
            <person name="Waeber G."/>
            <person name="Schorderet D.F."/>
            <person name="Bonny C."/>
        </authorList>
    </citation>
    <scope>NUCLEOTIDE SEQUENCE [MRNA] (ISOFORM 2)</scope>
    <source>
        <tissue>Brain</tissue>
        <tissue>Insulinoma</tissue>
    </source>
</reference>
<reference key="3">
    <citation type="journal article" date="1999" name="Nature">
        <title>The DNA sequence of human chromosome 22.</title>
        <authorList>
            <person name="Dunham I."/>
            <person name="Hunt A.R."/>
            <person name="Collins J.E."/>
            <person name="Bruskiewich R."/>
            <person name="Beare D.M."/>
            <person name="Clamp M."/>
            <person name="Smink L.J."/>
            <person name="Ainscough R."/>
            <person name="Almeida J.P."/>
            <person name="Babbage A.K."/>
            <person name="Bagguley C."/>
            <person name="Bailey J."/>
            <person name="Barlow K.F."/>
            <person name="Bates K.N."/>
            <person name="Beasley O.P."/>
            <person name="Bird C.P."/>
            <person name="Blakey S.E."/>
            <person name="Bridgeman A.M."/>
            <person name="Buck D."/>
            <person name="Burgess J."/>
            <person name="Burrill W.D."/>
            <person name="Burton J."/>
            <person name="Carder C."/>
            <person name="Carter N.P."/>
            <person name="Chen Y."/>
            <person name="Clark G."/>
            <person name="Clegg S.M."/>
            <person name="Cobley V.E."/>
            <person name="Cole C.G."/>
            <person name="Collier R.E."/>
            <person name="Connor R."/>
            <person name="Conroy D."/>
            <person name="Corby N.R."/>
            <person name="Coville G.J."/>
            <person name="Cox A.V."/>
            <person name="Davis J."/>
            <person name="Dawson E."/>
            <person name="Dhami P.D."/>
            <person name="Dockree C."/>
            <person name="Dodsworth S.J."/>
            <person name="Durbin R.M."/>
            <person name="Ellington A.G."/>
            <person name="Evans K.L."/>
            <person name="Fey J.M."/>
            <person name="Fleming K."/>
            <person name="French L."/>
            <person name="Garner A.A."/>
            <person name="Gilbert J.G.R."/>
            <person name="Goward M.E."/>
            <person name="Grafham D.V."/>
            <person name="Griffiths M.N.D."/>
            <person name="Hall C."/>
            <person name="Hall R.E."/>
            <person name="Hall-Tamlyn G."/>
            <person name="Heathcott R.W."/>
            <person name="Ho S."/>
            <person name="Holmes S."/>
            <person name="Hunt S.E."/>
            <person name="Jones M.C."/>
            <person name="Kershaw J."/>
            <person name="Kimberley A.M."/>
            <person name="King A."/>
            <person name="Laird G.K."/>
            <person name="Langford C.F."/>
            <person name="Leversha M.A."/>
            <person name="Lloyd C."/>
            <person name="Lloyd D.M."/>
            <person name="Martyn I.D."/>
            <person name="Mashreghi-Mohammadi M."/>
            <person name="Matthews L.H."/>
            <person name="Mccann O.T."/>
            <person name="Mcclay J."/>
            <person name="Mclaren S."/>
            <person name="McMurray A.A."/>
            <person name="Milne S.A."/>
            <person name="Mortimore B.J."/>
            <person name="Odell C.N."/>
            <person name="Pavitt R."/>
            <person name="Pearce A.V."/>
            <person name="Pearson D."/>
            <person name="Phillimore B.J.C.T."/>
            <person name="Phillips S.H."/>
            <person name="Plumb R.W."/>
            <person name="Ramsay H."/>
            <person name="Ramsey Y."/>
            <person name="Rogers L."/>
            <person name="Ross M.T."/>
            <person name="Scott C.E."/>
            <person name="Sehra H.K."/>
            <person name="Skuce C.D."/>
            <person name="Smalley S."/>
            <person name="Smith M.L."/>
            <person name="Soderlund C."/>
            <person name="Spragon L."/>
            <person name="Steward C.A."/>
            <person name="Sulston J.E."/>
            <person name="Swann R.M."/>
            <person name="Vaudin M."/>
            <person name="Wall M."/>
            <person name="Wallis J.M."/>
            <person name="Whiteley M.N."/>
            <person name="Willey D.L."/>
            <person name="Williams L."/>
            <person name="Williams S.A."/>
            <person name="Williamson H."/>
            <person name="Wilmer T.E."/>
            <person name="Wilming L."/>
            <person name="Wright C.L."/>
            <person name="Hubbard T."/>
            <person name="Bentley D.R."/>
            <person name="Beck S."/>
            <person name="Rogers J."/>
            <person name="Shimizu N."/>
            <person name="Minoshima S."/>
            <person name="Kawasaki K."/>
            <person name="Sasaki T."/>
            <person name="Asakawa S."/>
            <person name="Kudoh J."/>
            <person name="Shintani A."/>
            <person name="Shibuya K."/>
            <person name="Yoshizaki Y."/>
            <person name="Aoki N."/>
            <person name="Mitsuyama S."/>
            <person name="Roe B.A."/>
            <person name="Chen F."/>
            <person name="Chu L."/>
            <person name="Crabtree J."/>
            <person name="Deschamps S."/>
            <person name="Do A."/>
            <person name="Do T."/>
            <person name="Dorman A."/>
            <person name="Fang F."/>
            <person name="Fu Y."/>
            <person name="Hu P."/>
            <person name="Hua A."/>
            <person name="Kenton S."/>
            <person name="Lai H."/>
            <person name="Lao H.I."/>
            <person name="Lewis J."/>
            <person name="Lewis S."/>
            <person name="Lin S.-P."/>
            <person name="Loh P."/>
            <person name="Malaj E."/>
            <person name="Nguyen T."/>
            <person name="Pan H."/>
            <person name="Phan S."/>
            <person name="Qi S."/>
            <person name="Qian Y."/>
            <person name="Ray L."/>
            <person name="Ren Q."/>
            <person name="Shaull S."/>
            <person name="Sloan D."/>
            <person name="Song L."/>
            <person name="Wang Q."/>
            <person name="Wang Y."/>
            <person name="Wang Z."/>
            <person name="White J."/>
            <person name="Willingham D."/>
            <person name="Wu H."/>
            <person name="Yao Z."/>
            <person name="Zhan M."/>
            <person name="Zhang G."/>
            <person name="Chissoe S."/>
            <person name="Murray J."/>
            <person name="Miller N."/>
            <person name="Minx P."/>
            <person name="Fulton R."/>
            <person name="Johnson D."/>
            <person name="Bemis G."/>
            <person name="Bentley D."/>
            <person name="Bradshaw H."/>
            <person name="Bourne S."/>
            <person name="Cordes M."/>
            <person name="Du Z."/>
            <person name="Fulton L."/>
            <person name="Goela D."/>
            <person name="Graves T."/>
            <person name="Hawkins J."/>
            <person name="Hinds K."/>
            <person name="Kemp K."/>
            <person name="Latreille P."/>
            <person name="Layman D."/>
            <person name="Ozersky P."/>
            <person name="Rohlfing T."/>
            <person name="Scheet P."/>
            <person name="Walker C."/>
            <person name="Wamsley A."/>
            <person name="Wohldmann P."/>
            <person name="Pepin K."/>
            <person name="Nelson J."/>
            <person name="Korf I."/>
            <person name="Bedell J.A."/>
            <person name="Hillier L.W."/>
            <person name="Mardis E."/>
            <person name="Waterston R."/>
            <person name="Wilson R."/>
            <person name="Emanuel B.S."/>
            <person name="Shaikh T."/>
            <person name="Kurahashi H."/>
            <person name="Saitta S."/>
            <person name="Budarf M.L."/>
            <person name="McDermid H.E."/>
            <person name="Johnson A."/>
            <person name="Wong A.C.C."/>
            <person name="Morrow B.E."/>
            <person name="Edelmann L."/>
            <person name="Kim U.J."/>
            <person name="Shizuya H."/>
            <person name="Simon M.I."/>
            <person name="Dumanski J.P."/>
            <person name="Peyrard M."/>
            <person name="Kedra D."/>
            <person name="Seroussi E."/>
            <person name="Fransson I."/>
            <person name="Tapia I."/>
            <person name="Bruder C.E."/>
            <person name="O'Brien K.P."/>
            <person name="Wilkinson P."/>
            <person name="Bodenteich A."/>
            <person name="Hartman K."/>
            <person name="Hu X."/>
            <person name="Khan A.S."/>
            <person name="Lane L."/>
            <person name="Tilahun Y."/>
            <person name="Wright H."/>
        </authorList>
    </citation>
    <scope>NUCLEOTIDE SEQUENCE [LARGE SCALE GENOMIC DNA]</scope>
</reference>
<reference key="4">
    <citation type="submission" date="1996-06" db="EMBL/GenBank/DDBJ databases">
        <authorList>
            <person name="Adams M.D."/>
        </authorList>
    </citation>
    <scope>NUCLEOTIDE SEQUENCE [GENOMIC DNA] (ISOFORM 3)</scope>
</reference>
<reference key="5">
    <citation type="journal article" date="2004" name="Genome Res.">
        <title>The status, quality, and expansion of the NIH full-length cDNA project: the Mammalian Gene Collection (MGC).</title>
        <authorList>
            <consortium name="The MGC Project Team"/>
        </authorList>
    </citation>
    <scope>NUCLEOTIDE SEQUENCE [LARGE SCALE MRNA] (ISOFORM 4)</scope>
    <source>
        <tissue>Brain</tissue>
    </source>
</reference>
<reference key="6">
    <citation type="journal article" date="2003" name="Genome Res.">
        <title>Reevaluating human gene annotation: a second-generation analysis of chromosome 22.</title>
        <authorList>
            <person name="Collins J.E."/>
            <person name="Goward M.E."/>
            <person name="Cole C.G."/>
            <person name="Smink L.J."/>
            <person name="Huckle E.J."/>
            <person name="Knowles S."/>
            <person name="Bye J.M."/>
            <person name="Beare D.M."/>
            <person name="Dunham I."/>
        </authorList>
    </citation>
    <scope>NUCLEOTIDE SEQUENCE [LARGE SCALE MRNA] OF 289-824</scope>
</reference>
<reference key="7">
    <citation type="journal article" date="1997" name="Genome Res.">
        <title>Large-scale concatenation cDNA sequencing.</title>
        <authorList>
            <person name="Yu W."/>
            <person name="Andersson B."/>
            <person name="Worley K.C."/>
            <person name="Muzny D.M."/>
            <person name="Ding Y."/>
            <person name="Liu W."/>
            <person name="Ricafrente J.Y."/>
            <person name="Wentland M.A."/>
            <person name="Lennon G."/>
            <person name="Gibbs R.A."/>
        </authorList>
    </citation>
    <scope>NUCLEOTIDE SEQUENCE [LARGE SCALE MRNA] OF 599-824 (ISOFORM 1)</scope>
    <source>
        <tissue>Brain</tissue>
    </source>
</reference>
<reference key="8">
    <citation type="journal article" date="2001" name="Curr. Biol.">
        <title>Fibroblast growth factor homologous factors are intracellular signaling proteins.</title>
        <authorList>
            <person name="Schoorlemmer J."/>
            <person name="Goldfarb M."/>
        </authorList>
    </citation>
    <scope>INTERACTION WITH FGF13 AND MAPK13</scope>
</reference>